<sequence length="1342" mass="150571">MVYSYTEKKRIRKDFGKRPQVLDVPYLLSIQLDSFQKFIEQDPEGQYGLEAAFRSVFPIQSYSGNSELQYVSYRLGEPVFDVQECQIRGVTYSAPLRVKLRLVIYEREAPEGTVKDIKEQEVYMGEIPLMTDNGTFVINGTERVIVSQLHRSPGVFFDSDKGKTHSSGKVLYNARIIPYRGSWLDFEFDPKDNLFVRIDRRRKLPATIILRALNYTTEQILDLFFEKVVFEIRDNKLQMELIPERLRGETASFDIEANGKVYVEKGRRITARHIRQLEKDDIKHIEVPVEYIAGKVVSKDYVDESTGELICAANMELSLDLLAKLSQSGHKRIETLFTNDLDHGPYISETVRVDPTNDRLSALVEIYRMMRPGEPPTREAAESLFENLFFSEDRYDLSAVGRMKFNRSLLRDEIEGSGILSKDDIIDVMKKLIDIRNGKGEVDDIDHLGNRRIRSVGEMAENQFRVGLVRVERAVKERLSLGDLDTLMPQDMINAKPISAAVKEFFGSSQLSQFMDQNNPLSEITHKRRISALGPGGLTRERAGFEVRDVHPTHYGRVCPIETPEGPNIGLINSLSVYAQTNEYGFLETPYRRVVDGVVTDEIHYLSAIEEGNYVIAQANSNLDDEGHFVEDLVTCRSKGESSLFSRDQVDYMDVSTQQVVSVGASLIPFLEHDDANRALMGANMQRQAVPTLRADKPLVGTGMERAVAVDSGVTAVAKRGGTVQYVDASRIVIKVNEDEMYPGEAGIDIYNLTKYTRSNQNTCINQMPCVSLGEPVERGDVLADGPSTDLGELALGQNMRVAFMPWNGYNFEDSILVSERVVQEDRFTTIHIQELACVSRDTKLGPEEITADIPNVGEAALSKLDESGIVYIGAEVTGGDILVGKVTPKGETQLTPEEKLLRAIFGEKASDVKDSSLRVPNGVSGTVIDVQVFTRDGVEKDKRALEIEEMQLKQAKKDLSEELQILEAGLFSRIRAVLVSGGVEAEKLDKLPRDRWLELGLTDEEKQNQLEQLAEQYDELKHEFEKKLEAKRRKITQGDDLAPGVLKIVKVYLAVKRRIQPGDKMAGRHGNKGVISKINPIEDMPYDENGTPVDIVLNPLGVPSRMNIGQILETHLGMAAKGIGDKINAMLKQQQEVAKLREFIQRAYDLGADVRQKVDLSTFSDDEVLRLAENLRKGMPIATPVFDGAKEAEIKELLKLGDLPTSGQITLFDGRTGEQFERPVTVGYMYMLKLNHLVDDKMHARSTGSYSLVTQQPLGGKAQFGGQRFGEMEVWALEAYGAAYTLQEMLTVKSDDVNGRTKMYKNIVDGNHQMEPGMPESFNVLLKEIRSLGINIELEDE</sequence>
<comment type="function">
    <text evidence="1">DNA-dependent RNA polymerase catalyzes the transcription of DNA into RNA using the four ribonucleoside triphosphates as substrates.</text>
</comment>
<comment type="catalytic activity">
    <reaction evidence="1">
        <text>RNA(n) + a ribonucleoside 5'-triphosphate = RNA(n+1) + diphosphate</text>
        <dbReference type="Rhea" id="RHEA:21248"/>
        <dbReference type="Rhea" id="RHEA-COMP:14527"/>
        <dbReference type="Rhea" id="RHEA-COMP:17342"/>
        <dbReference type="ChEBI" id="CHEBI:33019"/>
        <dbReference type="ChEBI" id="CHEBI:61557"/>
        <dbReference type="ChEBI" id="CHEBI:140395"/>
        <dbReference type="EC" id="2.7.7.6"/>
    </reaction>
</comment>
<comment type="subunit">
    <text evidence="1">The RNAP catalytic core consists of 2 alpha, 1 beta, 1 beta' and 1 omega subunit. When a sigma factor is associated with the core the holoenzyme is formed, which can initiate transcription.</text>
</comment>
<comment type="similarity">
    <text evidence="1">Belongs to the RNA polymerase beta chain family.</text>
</comment>
<organism>
    <name type="scientific">Salmonella paratyphi B (strain ATCC BAA-1250 / SPB7)</name>
    <dbReference type="NCBI Taxonomy" id="1016998"/>
    <lineage>
        <taxon>Bacteria</taxon>
        <taxon>Pseudomonadati</taxon>
        <taxon>Pseudomonadota</taxon>
        <taxon>Gammaproteobacteria</taxon>
        <taxon>Enterobacterales</taxon>
        <taxon>Enterobacteriaceae</taxon>
        <taxon>Salmonella</taxon>
    </lineage>
</organism>
<keyword id="KW-0240">DNA-directed RNA polymerase</keyword>
<keyword id="KW-0548">Nucleotidyltransferase</keyword>
<keyword id="KW-0804">Transcription</keyword>
<keyword id="KW-0808">Transferase</keyword>
<protein>
    <recommendedName>
        <fullName evidence="1">DNA-directed RNA polymerase subunit beta</fullName>
        <shortName evidence="1">RNAP subunit beta</shortName>
        <ecNumber evidence="1">2.7.7.6</ecNumber>
    </recommendedName>
    <alternativeName>
        <fullName evidence="1">RNA polymerase subunit beta</fullName>
    </alternativeName>
    <alternativeName>
        <fullName evidence="1">Transcriptase subunit beta</fullName>
    </alternativeName>
</protein>
<gene>
    <name evidence="1" type="primary">rpoB</name>
    <name type="ordered locus">SPAB_05142</name>
</gene>
<evidence type="ECO:0000255" key="1">
    <source>
        <dbReference type="HAMAP-Rule" id="MF_01321"/>
    </source>
</evidence>
<dbReference type="EC" id="2.7.7.6" evidence="1"/>
<dbReference type="EMBL" id="CP000886">
    <property type="protein sequence ID" value="ABX70423.1"/>
    <property type="molecule type" value="Genomic_DNA"/>
</dbReference>
<dbReference type="RefSeq" id="WP_000263105.1">
    <property type="nucleotide sequence ID" value="NC_010102.1"/>
</dbReference>
<dbReference type="SMR" id="A9N0J4"/>
<dbReference type="KEGG" id="spq:SPAB_05142"/>
<dbReference type="PATRIC" id="fig|1016998.12.peg.4817"/>
<dbReference type="HOGENOM" id="CLU_000524_4_0_6"/>
<dbReference type="BioCyc" id="SENT1016998:SPAB_RS20925-MONOMER"/>
<dbReference type="Proteomes" id="UP000008556">
    <property type="component" value="Chromosome"/>
</dbReference>
<dbReference type="GO" id="GO:0000428">
    <property type="term" value="C:DNA-directed RNA polymerase complex"/>
    <property type="evidence" value="ECO:0007669"/>
    <property type="project" value="UniProtKB-KW"/>
</dbReference>
<dbReference type="GO" id="GO:0003677">
    <property type="term" value="F:DNA binding"/>
    <property type="evidence" value="ECO:0007669"/>
    <property type="project" value="UniProtKB-UniRule"/>
</dbReference>
<dbReference type="GO" id="GO:0003899">
    <property type="term" value="F:DNA-directed RNA polymerase activity"/>
    <property type="evidence" value="ECO:0007669"/>
    <property type="project" value="UniProtKB-UniRule"/>
</dbReference>
<dbReference type="GO" id="GO:0032549">
    <property type="term" value="F:ribonucleoside binding"/>
    <property type="evidence" value="ECO:0007669"/>
    <property type="project" value="InterPro"/>
</dbReference>
<dbReference type="GO" id="GO:0006351">
    <property type="term" value="P:DNA-templated transcription"/>
    <property type="evidence" value="ECO:0007669"/>
    <property type="project" value="UniProtKB-UniRule"/>
</dbReference>
<dbReference type="CDD" id="cd00653">
    <property type="entry name" value="RNA_pol_B_RPB2"/>
    <property type="match status" value="1"/>
</dbReference>
<dbReference type="FunFam" id="2.30.150.10:FF:000001">
    <property type="entry name" value="DNA-directed RNA polymerase subunit beta"/>
    <property type="match status" value="1"/>
</dbReference>
<dbReference type="FunFam" id="2.40.270.10:FF:000003">
    <property type="entry name" value="DNA-directed RNA polymerase subunit beta"/>
    <property type="match status" value="1"/>
</dbReference>
<dbReference type="FunFam" id="2.40.270.10:FF:000004">
    <property type="entry name" value="DNA-directed RNA polymerase subunit beta"/>
    <property type="match status" value="1"/>
</dbReference>
<dbReference type="FunFam" id="2.40.50.100:FF:000006">
    <property type="entry name" value="DNA-directed RNA polymerase subunit beta"/>
    <property type="match status" value="1"/>
</dbReference>
<dbReference type="FunFam" id="2.40.50.150:FF:000001">
    <property type="entry name" value="DNA-directed RNA polymerase subunit beta"/>
    <property type="match status" value="1"/>
</dbReference>
<dbReference type="FunFam" id="3.90.1100.10:FF:000002">
    <property type="entry name" value="DNA-directed RNA polymerase subunit beta"/>
    <property type="match status" value="1"/>
</dbReference>
<dbReference type="FunFam" id="3.90.1110.10:FF:000001">
    <property type="entry name" value="DNA-directed RNA polymerase subunit beta"/>
    <property type="match status" value="1"/>
</dbReference>
<dbReference type="FunFam" id="3.90.1110.10:FF:000004">
    <property type="entry name" value="DNA-directed RNA polymerase subunit beta"/>
    <property type="match status" value="1"/>
</dbReference>
<dbReference type="FunFam" id="3.90.1800.10:FF:000001">
    <property type="entry name" value="DNA-directed RNA polymerase subunit beta"/>
    <property type="match status" value="1"/>
</dbReference>
<dbReference type="Gene3D" id="2.40.50.100">
    <property type="match status" value="1"/>
</dbReference>
<dbReference type="Gene3D" id="2.40.50.150">
    <property type="match status" value="1"/>
</dbReference>
<dbReference type="Gene3D" id="3.90.1100.10">
    <property type="match status" value="2"/>
</dbReference>
<dbReference type="Gene3D" id="6.10.140.1670">
    <property type="match status" value="1"/>
</dbReference>
<dbReference type="Gene3D" id="2.30.150.10">
    <property type="entry name" value="DNA-directed RNA polymerase, beta subunit, external 1 domain"/>
    <property type="match status" value="1"/>
</dbReference>
<dbReference type="Gene3D" id="2.40.270.10">
    <property type="entry name" value="DNA-directed RNA polymerase, subunit 2, domain 6"/>
    <property type="match status" value="1"/>
</dbReference>
<dbReference type="Gene3D" id="3.90.1800.10">
    <property type="entry name" value="RNA polymerase alpha subunit dimerisation domain"/>
    <property type="match status" value="1"/>
</dbReference>
<dbReference type="Gene3D" id="3.90.1110.10">
    <property type="entry name" value="RNA polymerase Rpb2, domain 2"/>
    <property type="match status" value="1"/>
</dbReference>
<dbReference type="HAMAP" id="MF_01321">
    <property type="entry name" value="RNApol_bact_RpoB"/>
    <property type="match status" value="1"/>
</dbReference>
<dbReference type="InterPro" id="IPR042107">
    <property type="entry name" value="DNA-dir_RNA_pol_bsu_ext_1_sf"/>
</dbReference>
<dbReference type="InterPro" id="IPR019462">
    <property type="entry name" value="DNA-dir_RNA_pol_bsu_external_1"/>
</dbReference>
<dbReference type="InterPro" id="IPR015712">
    <property type="entry name" value="DNA-dir_RNA_pol_su2"/>
</dbReference>
<dbReference type="InterPro" id="IPR007120">
    <property type="entry name" value="DNA-dir_RNAP_su2_dom"/>
</dbReference>
<dbReference type="InterPro" id="IPR037033">
    <property type="entry name" value="DNA-dir_RNAP_su2_hyb_sf"/>
</dbReference>
<dbReference type="InterPro" id="IPR010243">
    <property type="entry name" value="RNA_pol_bsu_bac"/>
</dbReference>
<dbReference type="InterPro" id="IPR007121">
    <property type="entry name" value="RNA_pol_bsu_CS"/>
</dbReference>
<dbReference type="InterPro" id="IPR007644">
    <property type="entry name" value="RNA_pol_bsu_protrusion"/>
</dbReference>
<dbReference type="InterPro" id="IPR007642">
    <property type="entry name" value="RNA_pol_Rpb2_2"/>
</dbReference>
<dbReference type="InterPro" id="IPR037034">
    <property type="entry name" value="RNA_pol_Rpb2_2_sf"/>
</dbReference>
<dbReference type="InterPro" id="IPR007645">
    <property type="entry name" value="RNA_pol_Rpb2_3"/>
</dbReference>
<dbReference type="InterPro" id="IPR007641">
    <property type="entry name" value="RNA_pol_Rpb2_7"/>
</dbReference>
<dbReference type="InterPro" id="IPR014724">
    <property type="entry name" value="RNA_pol_RPB2_OB-fold"/>
</dbReference>
<dbReference type="NCBIfam" id="NF001616">
    <property type="entry name" value="PRK00405.1"/>
    <property type="match status" value="1"/>
</dbReference>
<dbReference type="NCBIfam" id="TIGR02013">
    <property type="entry name" value="rpoB"/>
    <property type="match status" value="1"/>
</dbReference>
<dbReference type="PANTHER" id="PTHR20856">
    <property type="entry name" value="DNA-DIRECTED RNA POLYMERASE I SUBUNIT 2"/>
    <property type="match status" value="1"/>
</dbReference>
<dbReference type="Pfam" id="PF04563">
    <property type="entry name" value="RNA_pol_Rpb2_1"/>
    <property type="match status" value="1"/>
</dbReference>
<dbReference type="Pfam" id="PF04561">
    <property type="entry name" value="RNA_pol_Rpb2_2"/>
    <property type="match status" value="2"/>
</dbReference>
<dbReference type="Pfam" id="PF04565">
    <property type="entry name" value="RNA_pol_Rpb2_3"/>
    <property type="match status" value="1"/>
</dbReference>
<dbReference type="Pfam" id="PF10385">
    <property type="entry name" value="RNA_pol_Rpb2_45"/>
    <property type="match status" value="1"/>
</dbReference>
<dbReference type="Pfam" id="PF00562">
    <property type="entry name" value="RNA_pol_Rpb2_6"/>
    <property type="match status" value="1"/>
</dbReference>
<dbReference type="Pfam" id="PF04560">
    <property type="entry name" value="RNA_pol_Rpb2_7"/>
    <property type="match status" value="1"/>
</dbReference>
<dbReference type="SUPFAM" id="SSF64484">
    <property type="entry name" value="beta and beta-prime subunits of DNA dependent RNA-polymerase"/>
    <property type="match status" value="1"/>
</dbReference>
<dbReference type="PROSITE" id="PS01166">
    <property type="entry name" value="RNA_POL_BETA"/>
    <property type="match status" value="1"/>
</dbReference>
<proteinExistence type="inferred from homology"/>
<name>RPOB_SALPB</name>
<accession>A9N0J4</accession>
<feature type="chain" id="PRO_1000086380" description="DNA-directed RNA polymerase subunit beta">
    <location>
        <begin position="1"/>
        <end position="1342"/>
    </location>
</feature>
<reference key="1">
    <citation type="submission" date="2007-11" db="EMBL/GenBank/DDBJ databases">
        <authorList>
            <consortium name="The Salmonella enterica serovar Paratyphi B Genome Sequencing Project"/>
            <person name="McClelland M."/>
            <person name="Sanderson E.K."/>
            <person name="Porwollik S."/>
            <person name="Spieth J."/>
            <person name="Clifton W.S."/>
            <person name="Fulton R."/>
            <person name="Cordes M."/>
            <person name="Wollam A."/>
            <person name="Shah N."/>
            <person name="Pepin K."/>
            <person name="Bhonagiri V."/>
            <person name="Nash W."/>
            <person name="Johnson M."/>
            <person name="Thiruvilangam P."/>
            <person name="Wilson R."/>
        </authorList>
    </citation>
    <scope>NUCLEOTIDE SEQUENCE [LARGE SCALE GENOMIC DNA]</scope>
    <source>
        <strain>ATCC BAA-1250 / SPB7</strain>
    </source>
</reference>